<comment type="subcellular location">
    <subcellularLocation>
        <location evidence="4">Secreted</location>
    </subcellularLocation>
</comment>
<comment type="tissue specificity">
    <text evidence="4">Prismatic layer of shell (at protein level). Expressed primarily in the mantle with highest level in the mantle edge and lower level in the mantle pallium.</text>
</comment>
<comment type="sequence caution" evidence="5">
    <conflict type="frameshift">
        <sequence resource="EMBL" id="GT280522"/>
    </conflict>
</comment>
<comment type="sequence caution" evidence="5">
    <conflict type="frameshift">
        <sequence resource="EMBL" id="GT282355"/>
    </conflict>
</comment>
<comment type="sequence caution" evidence="5">
    <conflict type="frameshift">
        <sequence resource="EMBL" id="GT283025"/>
    </conflict>
</comment>
<comment type="sequence caution" evidence="5">
    <conflict type="frameshift">
        <sequence resource="EMBL" id="GT283045"/>
    </conflict>
</comment>
<comment type="sequence caution" evidence="5">
    <conflict type="frameshift">
        <sequence resource="EMBL" id="GT283910"/>
    </conflict>
</comment>
<comment type="sequence caution" evidence="5">
    <conflict type="miscellaneous discrepancy">
        <sequence resource="EMBL" id="GT284086"/>
    </conflict>
    <text>Premature stop codon at position 267.</text>
</comment>
<proteinExistence type="evidence at protein level"/>
<organism>
    <name type="scientific">Pinctada maxima</name>
    <name type="common">Silver-lipped pearl oyster</name>
    <name type="synonym">White-lipped pearl oyster</name>
    <dbReference type="NCBI Taxonomy" id="104660"/>
    <lineage>
        <taxon>Eukaryota</taxon>
        <taxon>Metazoa</taxon>
        <taxon>Spiralia</taxon>
        <taxon>Lophotrochozoa</taxon>
        <taxon>Mollusca</taxon>
        <taxon>Bivalvia</taxon>
        <taxon>Autobranchia</taxon>
        <taxon>Pteriomorphia</taxon>
        <taxon>Pterioida</taxon>
        <taxon>Pterioidea</taxon>
        <taxon>Pteriidae</taxon>
        <taxon>Pinctada</taxon>
    </lineage>
</organism>
<name>SGQP_PINMA</name>
<accession>P86957</accession>
<dbReference type="EMBL" id="GT277953">
    <property type="status" value="NOT_ANNOTATED_CDS"/>
    <property type="molecule type" value="mRNA"/>
</dbReference>
<dbReference type="EMBL" id="GT278035">
    <property type="status" value="NOT_ANNOTATED_CDS"/>
    <property type="molecule type" value="mRNA"/>
</dbReference>
<dbReference type="EMBL" id="GT278036">
    <property type="status" value="NOT_ANNOTATED_CDS"/>
    <property type="molecule type" value="mRNA"/>
</dbReference>
<dbReference type="EMBL" id="GT278792">
    <property type="status" value="NOT_ANNOTATED_CDS"/>
    <property type="molecule type" value="mRNA"/>
</dbReference>
<dbReference type="EMBL" id="GT279484">
    <property type="status" value="NOT_ANNOTATED_CDS"/>
    <property type="molecule type" value="mRNA"/>
</dbReference>
<dbReference type="EMBL" id="GT279521">
    <property type="status" value="NOT_ANNOTATED_CDS"/>
    <property type="molecule type" value="mRNA"/>
</dbReference>
<dbReference type="EMBL" id="GT279611">
    <property type="status" value="NOT_ANNOTATED_CDS"/>
    <property type="molecule type" value="mRNA"/>
</dbReference>
<dbReference type="EMBL" id="GT279751">
    <property type="status" value="NOT_ANNOTATED_CDS"/>
    <property type="molecule type" value="mRNA"/>
</dbReference>
<dbReference type="EMBL" id="GT279966">
    <property type="status" value="NOT_ANNOTATED_CDS"/>
    <property type="molecule type" value="mRNA"/>
</dbReference>
<dbReference type="EMBL" id="GT279968">
    <property type="status" value="NOT_ANNOTATED_CDS"/>
    <property type="molecule type" value="mRNA"/>
</dbReference>
<dbReference type="EMBL" id="GT280339">
    <property type="status" value="NOT_ANNOTATED_CDS"/>
    <property type="molecule type" value="mRNA"/>
</dbReference>
<dbReference type="EMBL" id="GT280522">
    <property type="status" value="NOT_ANNOTATED_CDS"/>
    <property type="molecule type" value="mRNA"/>
</dbReference>
<dbReference type="EMBL" id="GT281542">
    <property type="status" value="NOT_ANNOTATED_CDS"/>
    <property type="molecule type" value="mRNA"/>
</dbReference>
<dbReference type="EMBL" id="GT281803">
    <property type="status" value="NOT_ANNOTATED_CDS"/>
    <property type="molecule type" value="mRNA"/>
</dbReference>
<dbReference type="EMBL" id="GT281882">
    <property type="status" value="NOT_ANNOTATED_CDS"/>
    <property type="molecule type" value="mRNA"/>
</dbReference>
<dbReference type="EMBL" id="GT282355">
    <property type="status" value="NOT_ANNOTATED_CDS"/>
    <property type="molecule type" value="mRNA"/>
</dbReference>
<dbReference type="EMBL" id="GT282683">
    <property type="status" value="NOT_ANNOTATED_CDS"/>
    <property type="molecule type" value="mRNA"/>
</dbReference>
<dbReference type="EMBL" id="GT282847">
    <property type="status" value="NOT_ANNOTATED_CDS"/>
    <property type="molecule type" value="mRNA"/>
</dbReference>
<dbReference type="EMBL" id="GT282988">
    <property type="status" value="NOT_ANNOTATED_CDS"/>
    <property type="molecule type" value="mRNA"/>
</dbReference>
<dbReference type="EMBL" id="GT283025">
    <property type="status" value="NOT_ANNOTATED_CDS"/>
    <property type="molecule type" value="mRNA"/>
</dbReference>
<dbReference type="EMBL" id="GT283045">
    <property type="status" value="NOT_ANNOTATED_CDS"/>
    <property type="molecule type" value="mRNA"/>
</dbReference>
<dbReference type="EMBL" id="GT283282">
    <property type="status" value="NOT_ANNOTATED_CDS"/>
    <property type="molecule type" value="mRNA"/>
</dbReference>
<dbReference type="EMBL" id="GT283657">
    <property type="status" value="NOT_ANNOTATED_CDS"/>
    <property type="molecule type" value="mRNA"/>
</dbReference>
<dbReference type="EMBL" id="GT283748">
    <property type="status" value="NOT_ANNOTATED_CDS"/>
    <property type="molecule type" value="mRNA"/>
</dbReference>
<dbReference type="EMBL" id="GT283791">
    <property type="status" value="NOT_ANNOTATED_CDS"/>
    <property type="molecule type" value="mRNA"/>
</dbReference>
<dbReference type="EMBL" id="GT283910">
    <property type="status" value="NOT_ANNOTATED_CDS"/>
    <property type="molecule type" value="mRNA"/>
</dbReference>
<dbReference type="EMBL" id="GT283947">
    <property type="status" value="NOT_ANNOTATED_CDS"/>
    <property type="molecule type" value="mRNA"/>
</dbReference>
<dbReference type="EMBL" id="GT284086">
    <property type="status" value="NOT_ANNOTATED_CDS"/>
    <property type="molecule type" value="mRNA"/>
</dbReference>
<dbReference type="EMBL" id="GT284367">
    <property type="status" value="NOT_ANNOTATED_CDS"/>
    <property type="molecule type" value="mRNA"/>
</dbReference>
<dbReference type="EMBL" id="EZ420120">
    <property type="status" value="NOT_ANNOTATED_CDS"/>
    <property type="molecule type" value="mRNA"/>
</dbReference>
<dbReference type="GO" id="GO:0005576">
    <property type="term" value="C:extracellular region"/>
    <property type="evidence" value="ECO:0007669"/>
    <property type="project" value="UniProtKB-SubCell"/>
</dbReference>
<protein>
    <recommendedName>
        <fullName>Serine, glycine and glutamine-rich protein</fullName>
    </recommendedName>
    <alternativeName>
        <fullName>Cement-like protein</fullName>
    </alternativeName>
</protein>
<keyword id="KW-0903">Direct protein sequencing</keyword>
<keyword id="KW-0964">Secreted</keyword>
<keyword id="KW-0732">Signal</keyword>
<reference evidence="5" key="1">
    <citation type="journal article" date="2010" name="Mol. Biol. Evol.">
        <title>Parallel evolution of nacre building gene sets in molluscs.</title>
        <authorList>
            <person name="Jackson D.J."/>
            <person name="McDougall C."/>
            <person name="Woodcroft B."/>
            <person name="Moase P."/>
            <person name="Rose R.A."/>
            <person name="Kube M."/>
            <person name="Reinhardt R."/>
            <person name="Rokhsar D.S."/>
            <person name="Montagnani C."/>
            <person name="Joubert C."/>
            <person name="Piquemal D."/>
            <person name="Degnan B.M."/>
        </authorList>
    </citation>
    <scope>NUCLEOTIDE SEQUENCE [MRNA]</scope>
    <scope>IDENTIFICATION</scope>
    <source>
        <tissue evidence="3">Mantle</tissue>
    </source>
</reference>
<reference key="2">
    <citation type="journal article" date="2012" name="Proc. Natl. Acad. Sci. U.S.A.">
        <title>Different secretory repertoires control the biomineralization processes of prism and nacre deposition of the pearl oyster shell.</title>
        <authorList>
            <person name="Marie B."/>
            <person name="Joubert C."/>
            <person name="Tayale A."/>
            <person name="Zanella-Cleon I."/>
            <person name="Belliard C."/>
            <person name="Piquemal D."/>
            <person name="Cochennec-Laureau N."/>
            <person name="Marin F."/>
            <person name="Gueguen Y."/>
            <person name="Montagnani C."/>
        </authorList>
    </citation>
    <scope>PROTEIN SEQUENCE OF 157-185</scope>
    <scope>SUBCELLULAR LOCATION</scope>
    <scope>TISSUE SPECIFICITY</scope>
    <source>
        <tissue>Shell</tissue>
    </source>
</reference>
<feature type="signal peptide" evidence="1">
    <location>
        <begin position="1"/>
        <end position="16"/>
    </location>
</feature>
<feature type="chain" id="PRO_0000413083" description="Serine, glycine and glutamine-rich protein" evidence="1">
    <location>
        <begin position="17"/>
        <end position="329"/>
    </location>
</feature>
<feature type="region of interest" description="Disordered" evidence="2">
    <location>
        <begin position="38"/>
        <end position="80"/>
    </location>
</feature>
<feature type="compositionally biased region" description="Low complexity" evidence="2">
    <location>
        <begin position="38"/>
        <end position="48"/>
    </location>
</feature>
<feature type="compositionally biased region" description="Gly residues" evidence="2">
    <location>
        <begin position="49"/>
        <end position="80"/>
    </location>
</feature>
<feature type="sequence conflict" description="In Ref. 1; GT283910." evidence="5" ref="1">
    <original>V</original>
    <variation>P</variation>
    <location>
        <position position="9"/>
    </location>
</feature>
<feature type="sequence conflict" description="In Ref. 1; GT283282." evidence="5" ref="1">
    <original>GG</original>
    <variation>SP</variation>
    <location>
        <begin position="107"/>
        <end position="108"/>
    </location>
</feature>
<feature type="sequence conflict" description="In Ref. 1; GT278035." evidence="5" ref="1">
    <original>G</original>
    <variation>D</variation>
    <location>
        <position position="108"/>
    </location>
</feature>
<feature type="sequence conflict" description="In Ref. 1; GT278035." evidence="5" ref="1">
    <original>G</original>
    <variation>R</variation>
    <location>
        <position position="111"/>
    </location>
</feature>
<feature type="sequence conflict" description="In Ref. 1; GT278035." evidence="5" ref="1">
    <original>K</original>
    <variation>Q</variation>
    <location>
        <position position="114"/>
    </location>
</feature>
<feature type="sequence conflict" description="In Ref. 1; GT283947." evidence="5" ref="1">
    <original>G</original>
    <variation>S</variation>
    <location>
        <position position="132"/>
    </location>
</feature>
<feature type="sequence conflict" description="In Ref. 1; GT284367." evidence="5" ref="1">
    <original>G</original>
    <variation>S</variation>
    <location>
        <position position="141"/>
    </location>
</feature>
<feature type="sequence conflict" description="In Ref. 1; GT278792." evidence="5" ref="1">
    <original>R</original>
    <variation>S</variation>
    <location>
        <position position="148"/>
    </location>
</feature>
<feature type="sequence conflict" description="In Ref. 1; GT283025." evidence="5" ref="1">
    <original>V</original>
    <variation>L</variation>
    <location>
        <position position="152"/>
    </location>
</feature>
<feature type="sequence conflict" description="In Ref. 1; GT283025." evidence="5" ref="1">
    <original>S</original>
    <variation>I</variation>
    <location>
        <position position="155"/>
    </location>
</feature>
<feature type="sequence conflict" description="In Ref. 1; GT279611." evidence="5" ref="1">
    <original>I</original>
    <variation>F</variation>
    <location>
        <position position="159"/>
    </location>
</feature>
<feature type="sequence conflict" description="In Ref. 1; GT283025." evidence="5" ref="1">
    <original>G</original>
    <variation>C</variation>
    <location>
        <position position="178"/>
    </location>
</feature>
<feature type="sequence conflict" description="In Ref. 1; GT283025." evidence="5" ref="1">
    <original>G</original>
    <variation>C</variation>
    <location>
        <position position="182"/>
    </location>
</feature>
<feature type="sequence conflict" description="In Ref. 1; GT278792." evidence="5" ref="1">
    <original>R</original>
    <variation>I</variation>
    <location>
        <position position="185"/>
    </location>
</feature>
<feature type="sequence conflict" description="In Ref. 1; GT283910." evidence="5" ref="1">
    <original>G</original>
    <variation>R</variation>
    <location>
        <position position="195"/>
    </location>
</feature>
<feature type="sequence conflict" description="In Ref. 1; GT278036." evidence="5" ref="1">
    <original>H</original>
    <variation>P</variation>
    <location>
        <position position="198"/>
    </location>
</feature>
<feature type="sequence conflict" description="In Ref. 1; GT284086." evidence="5" ref="1">
    <original>H</original>
    <variation>R</variation>
    <location>
        <position position="198"/>
    </location>
</feature>
<feature type="sequence conflict" description="In Ref. 1; GT278792." evidence="5" ref="1">
    <original>N</original>
    <variation>H</variation>
    <location>
        <position position="200"/>
    </location>
</feature>
<feature type="sequence conflict" description="In Ref. 1; GT280339." evidence="5" ref="1">
    <original>G</original>
    <variation>S</variation>
    <location>
        <position position="213"/>
    </location>
</feature>
<feature type="sequence conflict" description="In Ref. 1; GT278036." evidence="5" ref="1">
    <original>H</original>
    <variation>P</variation>
    <location>
        <position position="227"/>
    </location>
</feature>
<feature type="sequence conflict" description="In Ref. 1; GT278036." evidence="5" ref="1">
    <original>Q</original>
    <variation>P</variation>
    <location>
        <position position="232"/>
    </location>
</feature>
<feature type="sequence conflict" description="In Ref. 1; GT284086." evidence="5" ref="1">
    <original>Q</original>
    <variation>R</variation>
    <location>
        <position position="235"/>
    </location>
</feature>
<feature type="sequence conflict" description="In Ref. 1; GT278036." evidence="5" ref="1">
    <original>V</original>
    <variation>F</variation>
    <location>
        <position position="241"/>
    </location>
</feature>
<feature type="sequence conflict" description="In Ref. 1; GT278036." evidence="5" ref="1">
    <original>Q</original>
    <variation>H</variation>
    <location>
        <position position="245"/>
    </location>
</feature>
<feature type="sequence conflict" description="In Ref. 1; GT283045." evidence="5" ref="1">
    <original>Q</original>
    <variation>P</variation>
    <location>
        <position position="262"/>
    </location>
</feature>
<feature type="sequence conflict" description="In Ref. 1; GT277953." evidence="5" ref="1">
    <original>R</original>
    <variation>K</variation>
    <location>
        <position position="295"/>
    </location>
</feature>
<feature type="sequence conflict" description="In Ref. 1; GT282988/GT279484." evidence="5" ref="1">
    <original>G</original>
    <variation>S</variation>
    <location>
        <position position="296"/>
    </location>
</feature>
<feature type="sequence conflict" description="In Ref. 1; GT277953." evidence="5" ref="1">
    <original>S</original>
    <variation>T</variation>
    <location>
        <position position="297"/>
    </location>
</feature>
<evidence type="ECO:0000255" key="1"/>
<evidence type="ECO:0000256" key="2">
    <source>
        <dbReference type="SAM" id="MobiDB-lite"/>
    </source>
</evidence>
<evidence type="ECO:0000269" key="3">
    <source>
    </source>
</evidence>
<evidence type="ECO:0000269" key="4">
    <source>
    </source>
</evidence>
<evidence type="ECO:0000305" key="5"/>
<sequence length="329" mass="32486">MKTVLLFVVLVGLAYCDDDGWDMGNFFQQYHQWQQQISSSSSSSSSSSSGGGGSSGGGASGGGGGSSSGGGGASGGGGGGSSGGGGLTKVVLKAGGGGGGGFKSVGGGRGGVTKLVASGGASGGGSVSGGGGGSLALLAGGSAAGGGRSGVVTVSKQPIIINRQVTHVNTGGSGGGVGGGFGGGRGGFGYGLYGGYHHYNPCGYGQVYSYYYGCQSIYKQPARQVYHQPVYQPVQTVHQPVQYYQQPYQYQHSYGQPSYAYQPQTTKYISYSYPQYSSQGSYPTVAGGSAGGFVRGSSGGMGFSSGGIGGHSSYPLSVFKHAKGEKYKL</sequence>